<comment type="function">
    <text evidence="1">Catalyzes the reversible conversion of 3-phosphohydroxypyruvate to phosphoserine and of 3-hydroxy-2-oxo-4-phosphonooxybutanoate to phosphohydroxythreonine.</text>
</comment>
<comment type="catalytic activity">
    <reaction evidence="1">
        <text>O-phospho-L-serine + 2-oxoglutarate = 3-phosphooxypyruvate + L-glutamate</text>
        <dbReference type="Rhea" id="RHEA:14329"/>
        <dbReference type="ChEBI" id="CHEBI:16810"/>
        <dbReference type="ChEBI" id="CHEBI:18110"/>
        <dbReference type="ChEBI" id="CHEBI:29985"/>
        <dbReference type="ChEBI" id="CHEBI:57524"/>
        <dbReference type="EC" id="2.6.1.52"/>
    </reaction>
</comment>
<comment type="catalytic activity">
    <reaction evidence="1">
        <text>4-(phosphooxy)-L-threonine + 2-oxoglutarate = (R)-3-hydroxy-2-oxo-4-phosphooxybutanoate + L-glutamate</text>
        <dbReference type="Rhea" id="RHEA:16573"/>
        <dbReference type="ChEBI" id="CHEBI:16810"/>
        <dbReference type="ChEBI" id="CHEBI:29985"/>
        <dbReference type="ChEBI" id="CHEBI:58452"/>
        <dbReference type="ChEBI" id="CHEBI:58538"/>
        <dbReference type="EC" id="2.6.1.52"/>
    </reaction>
</comment>
<comment type="cofactor">
    <cofactor evidence="1">
        <name>pyridoxal 5'-phosphate</name>
        <dbReference type="ChEBI" id="CHEBI:597326"/>
    </cofactor>
    <text evidence="1">Binds 1 pyridoxal phosphate per subunit.</text>
</comment>
<comment type="pathway">
    <text evidence="1">Amino-acid biosynthesis; L-serine biosynthesis; L-serine from 3-phospho-D-glycerate: step 2/3.</text>
</comment>
<comment type="pathway">
    <text evidence="1">Cofactor biosynthesis; pyridoxine 5'-phosphate biosynthesis; pyridoxine 5'-phosphate from D-erythrose 4-phosphate: step 3/5.</text>
</comment>
<comment type="subunit">
    <text evidence="1">Homodimer.</text>
</comment>
<comment type="subcellular location">
    <subcellularLocation>
        <location evidence="1">Cytoplasm</location>
    </subcellularLocation>
</comment>
<comment type="similarity">
    <text evidence="1">Belongs to the class-V pyridoxal-phosphate-dependent aminotransferase family. SerC subfamily.</text>
</comment>
<sequence>MSAIYNFCAGPAMLPAAVMKKAQQELLDWNGLGVSVMEVSHRGKEFIALTKQAEADLRELMHIPQNYHVLFMHGGGRGQFSAVVNNFLGNQGRALYLVSGQWSSAALAEAQKLAGDTQIDSLNIVEKHNGLNAVVLPELHKIDADYRYVHYCPNETVDGIEIFDELDSPWPIVADLSSTIMSREIDVSRYGLIYAGAQKNIGPSGLSIVIVRDDMLKLPSLTQSSIMDYRLAVEHDSMFNTPPTFAWYLAAEVFAWLKSLGGVASIAKINQQKAQMLYACIDANPFYKNGVVAANRSQMNVTFQLADESLDGAFLKEAEAAGLVALKGHRIVGGMRASLYNAMPLEGVAALVSFMNEFAAKHS</sequence>
<protein>
    <recommendedName>
        <fullName evidence="1">Phosphoserine aminotransferase</fullName>
        <ecNumber evidence="1">2.6.1.52</ecNumber>
    </recommendedName>
    <alternativeName>
        <fullName evidence="1">Phosphohydroxythreonine aminotransferase</fullName>
        <shortName evidence="1">PSAT</shortName>
    </alternativeName>
</protein>
<evidence type="ECO:0000255" key="1">
    <source>
        <dbReference type="HAMAP-Rule" id="MF_00160"/>
    </source>
</evidence>
<proteinExistence type="inferred from homology"/>
<accession>A0KWN5</accession>
<dbReference type="EC" id="2.6.1.52" evidence="1"/>
<dbReference type="EMBL" id="CP000469">
    <property type="protein sequence ID" value="ABK48204.1"/>
    <property type="molecule type" value="Genomic_DNA"/>
</dbReference>
<dbReference type="RefSeq" id="WP_011716968.1">
    <property type="nucleotide sequence ID" value="NC_008577.1"/>
</dbReference>
<dbReference type="SMR" id="A0KWN5"/>
<dbReference type="STRING" id="94122.Shewana3_1973"/>
<dbReference type="KEGG" id="shn:Shewana3_1973"/>
<dbReference type="eggNOG" id="COG1932">
    <property type="taxonomic scope" value="Bacteria"/>
</dbReference>
<dbReference type="HOGENOM" id="CLU_034866_0_2_6"/>
<dbReference type="OrthoDB" id="9809412at2"/>
<dbReference type="UniPathway" id="UPA00135">
    <property type="reaction ID" value="UER00197"/>
</dbReference>
<dbReference type="UniPathway" id="UPA00244">
    <property type="reaction ID" value="UER00311"/>
</dbReference>
<dbReference type="Proteomes" id="UP000002589">
    <property type="component" value="Chromosome"/>
</dbReference>
<dbReference type="GO" id="GO:0005737">
    <property type="term" value="C:cytoplasm"/>
    <property type="evidence" value="ECO:0007669"/>
    <property type="project" value="UniProtKB-SubCell"/>
</dbReference>
<dbReference type="GO" id="GO:0004648">
    <property type="term" value="F:O-phospho-L-serine:2-oxoglutarate aminotransferase activity"/>
    <property type="evidence" value="ECO:0007669"/>
    <property type="project" value="UniProtKB-UniRule"/>
</dbReference>
<dbReference type="GO" id="GO:0030170">
    <property type="term" value="F:pyridoxal phosphate binding"/>
    <property type="evidence" value="ECO:0007669"/>
    <property type="project" value="UniProtKB-UniRule"/>
</dbReference>
<dbReference type="GO" id="GO:0006564">
    <property type="term" value="P:L-serine biosynthetic process"/>
    <property type="evidence" value="ECO:0007669"/>
    <property type="project" value="UniProtKB-UniRule"/>
</dbReference>
<dbReference type="GO" id="GO:0008615">
    <property type="term" value="P:pyridoxine biosynthetic process"/>
    <property type="evidence" value="ECO:0007669"/>
    <property type="project" value="UniProtKB-UniRule"/>
</dbReference>
<dbReference type="FunFam" id="3.40.640.10:FF:000010">
    <property type="entry name" value="Phosphoserine aminotransferase"/>
    <property type="match status" value="1"/>
</dbReference>
<dbReference type="FunFam" id="3.90.1150.10:FF:000006">
    <property type="entry name" value="Phosphoserine aminotransferase"/>
    <property type="match status" value="1"/>
</dbReference>
<dbReference type="Gene3D" id="3.90.1150.10">
    <property type="entry name" value="Aspartate Aminotransferase, domain 1"/>
    <property type="match status" value="1"/>
</dbReference>
<dbReference type="Gene3D" id="3.40.640.10">
    <property type="entry name" value="Type I PLP-dependent aspartate aminotransferase-like (Major domain)"/>
    <property type="match status" value="1"/>
</dbReference>
<dbReference type="HAMAP" id="MF_00160">
    <property type="entry name" value="SerC_aminotrans_5"/>
    <property type="match status" value="1"/>
</dbReference>
<dbReference type="InterPro" id="IPR000192">
    <property type="entry name" value="Aminotrans_V_dom"/>
</dbReference>
<dbReference type="InterPro" id="IPR020578">
    <property type="entry name" value="Aminotrans_V_PyrdxlP_BS"/>
</dbReference>
<dbReference type="InterPro" id="IPR022278">
    <property type="entry name" value="Pser_aminoTfrase"/>
</dbReference>
<dbReference type="InterPro" id="IPR015424">
    <property type="entry name" value="PyrdxlP-dep_Trfase"/>
</dbReference>
<dbReference type="InterPro" id="IPR015421">
    <property type="entry name" value="PyrdxlP-dep_Trfase_major"/>
</dbReference>
<dbReference type="InterPro" id="IPR015422">
    <property type="entry name" value="PyrdxlP-dep_Trfase_small"/>
</dbReference>
<dbReference type="NCBIfam" id="NF003764">
    <property type="entry name" value="PRK05355.1"/>
    <property type="match status" value="1"/>
</dbReference>
<dbReference type="NCBIfam" id="TIGR01364">
    <property type="entry name" value="serC_1"/>
    <property type="match status" value="1"/>
</dbReference>
<dbReference type="PANTHER" id="PTHR43247">
    <property type="entry name" value="PHOSPHOSERINE AMINOTRANSFERASE"/>
    <property type="match status" value="1"/>
</dbReference>
<dbReference type="PANTHER" id="PTHR43247:SF1">
    <property type="entry name" value="PHOSPHOSERINE AMINOTRANSFERASE"/>
    <property type="match status" value="1"/>
</dbReference>
<dbReference type="Pfam" id="PF00266">
    <property type="entry name" value="Aminotran_5"/>
    <property type="match status" value="1"/>
</dbReference>
<dbReference type="PIRSF" id="PIRSF000525">
    <property type="entry name" value="SerC"/>
    <property type="match status" value="1"/>
</dbReference>
<dbReference type="SUPFAM" id="SSF53383">
    <property type="entry name" value="PLP-dependent transferases"/>
    <property type="match status" value="1"/>
</dbReference>
<dbReference type="PROSITE" id="PS00595">
    <property type="entry name" value="AA_TRANSFER_CLASS_5"/>
    <property type="match status" value="1"/>
</dbReference>
<gene>
    <name evidence="1" type="primary">serC</name>
    <name type="ordered locus">Shewana3_1973</name>
</gene>
<feature type="chain" id="PRO_1000203572" description="Phosphoserine aminotransferase">
    <location>
        <begin position="1"/>
        <end position="363"/>
    </location>
</feature>
<feature type="binding site" evidence="1">
    <location>
        <position position="42"/>
    </location>
    <ligand>
        <name>L-glutamate</name>
        <dbReference type="ChEBI" id="CHEBI:29985"/>
    </ligand>
</feature>
<feature type="binding site" evidence="1">
    <location>
        <begin position="76"/>
        <end position="77"/>
    </location>
    <ligand>
        <name>pyridoxal 5'-phosphate</name>
        <dbReference type="ChEBI" id="CHEBI:597326"/>
    </ligand>
</feature>
<feature type="binding site" evidence="1">
    <location>
        <position position="102"/>
    </location>
    <ligand>
        <name>pyridoxal 5'-phosphate</name>
        <dbReference type="ChEBI" id="CHEBI:597326"/>
    </ligand>
</feature>
<feature type="binding site" evidence="1">
    <location>
        <position position="156"/>
    </location>
    <ligand>
        <name>pyridoxal 5'-phosphate</name>
        <dbReference type="ChEBI" id="CHEBI:597326"/>
    </ligand>
</feature>
<feature type="binding site" evidence="1">
    <location>
        <position position="175"/>
    </location>
    <ligand>
        <name>pyridoxal 5'-phosphate</name>
        <dbReference type="ChEBI" id="CHEBI:597326"/>
    </ligand>
</feature>
<feature type="binding site" evidence="1">
    <location>
        <position position="198"/>
    </location>
    <ligand>
        <name>pyridoxal 5'-phosphate</name>
        <dbReference type="ChEBI" id="CHEBI:597326"/>
    </ligand>
</feature>
<feature type="binding site" evidence="1">
    <location>
        <begin position="240"/>
        <end position="241"/>
    </location>
    <ligand>
        <name>pyridoxal 5'-phosphate</name>
        <dbReference type="ChEBI" id="CHEBI:597326"/>
    </ligand>
</feature>
<feature type="modified residue" description="N6-(pyridoxal phosphate)lysine" evidence="1">
    <location>
        <position position="199"/>
    </location>
</feature>
<organism>
    <name type="scientific">Shewanella sp. (strain ANA-3)</name>
    <dbReference type="NCBI Taxonomy" id="94122"/>
    <lineage>
        <taxon>Bacteria</taxon>
        <taxon>Pseudomonadati</taxon>
        <taxon>Pseudomonadota</taxon>
        <taxon>Gammaproteobacteria</taxon>
        <taxon>Alteromonadales</taxon>
        <taxon>Shewanellaceae</taxon>
        <taxon>Shewanella</taxon>
    </lineage>
</organism>
<keyword id="KW-0028">Amino-acid biosynthesis</keyword>
<keyword id="KW-0032">Aminotransferase</keyword>
<keyword id="KW-0963">Cytoplasm</keyword>
<keyword id="KW-0663">Pyridoxal phosphate</keyword>
<keyword id="KW-0664">Pyridoxine biosynthesis</keyword>
<keyword id="KW-0718">Serine biosynthesis</keyword>
<keyword id="KW-0808">Transferase</keyword>
<name>SERC_SHESA</name>
<reference key="1">
    <citation type="submission" date="2006-09" db="EMBL/GenBank/DDBJ databases">
        <title>Complete sequence of chromosome 1 of Shewanella sp. ANA-3.</title>
        <authorList>
            <person name="Copeland A."/>
            <person name="Lucas S."/>
            <person name="Lapidus A."/>
            <person name="Barry K."/>
            <person name="Detter J.C."/>
            <person name="Glavina del Rio T."/>
            <person name="Hammon N."/>
            <person name="Israni S."/>
            <person name="Dalin E."/>
            <person name="Tice H."/>
            <person name="Pitluck S."/>
            <person name="Chertkov O."/>
            <person name="Brettin T."/>
            <person name="Bruce D."/>
            <person name="Han C."/>
            <person name="Tapia R."/>
            <person name="Gilna P."/>
            <person name="Schmutz J."/>
            <person name="Larimer F."/>
            <person name="Land M."/>
            <person name="Hauser L."/>
            <person name="Kyrpides N."/>
            <person name="Kim E."/>
            <person name="Newman D."/>
            <person name="Salticov C."/>
            <person name="Konstantinidis K."/>
            <person name="Klappenback J."/>
            <person name="Tiedje J."/>
            <person name="Richardson P."/>
        </authorList>
    </citation>
    <scope>NUCLEOTIDE SEQUENCE [LARGE SCALE GENOMIC DNA]</scope>
    <source>
        <strain>ANA-3</strain>
    </source>
</reference>